<dbReference type="EMBL" id="D11386">
    <property type="protein sequence ID" value="BAA01982.1"/>
    <property type="molecule type" value="mRNA"/>
</dbReference>
<dbReference type="EMBL" id="D11387">
    <property type="protein sequence ID" value="BAA01983.1"/>
    <property type="molecule type" value="Genomic_DNA"/>
</dbReference>
<dbReference type="EMBL" id="Z74782">
    <property type="protein sequence ID" value="CAA99042.1"/>
    <property type="molecule type" value="Genomic_DNA"/>
</dbReference>
<dbReference type="EMBL" id="AY558426">
    <property type="protein sequence ID" value="AAS56752.1"/>
    <property type="molecule type" value="Genomic_DNA"/>
</dbReference>
<dbReference type="EMBL" id="BK006948">
    <property type="protein sequence ID" value="DAA10742.1"/>
    <property type="molecule type" value="Genomic_DNA"/>
</dbReference>
<dbReference type="PIR" id="S24053">
    <property type="entry name" value="S24053"/>
</dbReference>
<dbReference type="RefSeq" id="NP_014602.1">
    <property type="nucleotide sequence ID" value="NM_001183294.1"/>
</dbReference>
<dbReference type="PDB" id="3J6X">
    <property type="method" value="EM"/>
    <property type="resolution" value="6.10 A"/>
    <property type="chains" value="15=1-142"/>
</dbReference>
<dbReference type="PDB" id="3J6Y">
    <property type="method" value="EM"/>
    <property type="resolution" value="6.10 A"/>
    <property type="chains" value="15=1-142"/>
</dbReference>
<dbReference type="PDB" id="3J77">
    <property type="method" value="EM"/>
    <property type="resolution" value="6.20 A"/>
    <property type="chains" value="15=1-142"/>
</dbReference>
<dbReference type="PDB" id="3J78">
    <property type="method" value="EM"/>
    <property type="resolution" value="6.30 A"/>
    <property type="chains" value="15=1-142"/>
</dbReference>
<dbReference type="PDB" id="4U3M">
    <property type="method" value="X-ray"/>
    <property type="resolution" value="3.00 A"/>
    <property type="chains" value="C5/c5=2-142"/>
</dbReference>
<dbReference type="PDB" id="4U3N">
    <property type="method" value="X-ray"/>
    <property type="resolution" value="3.20 A"/>
    <property type="chains" value="C5/c5=2-142"/>
</dbReference>
<dbReference type="PDB" id="4U3U">
    <property type="method" value="X-ray"/>
    <property type="resolution" value="2.90 A"/>
    <property type="chains" value="C5/c5=2-142"/>
</dbReference>
<dbReference type="PDB" id="4U4N">
    <property type="method" value="X-ray"/>
    <property type="resolution" value="3.10 A"/>
    <property type="chains" value="C5/c5=2-142"/>
</dbReference>
<dbReference type="PDB" id="4U4O">
    <property type="method" value="X-ray"/>
    <property type="resolution" value="3.60 A"/>
    <property type="chains" value="C5/c5=2-142"/>
</dbReference>
<dbReference type="PDB" id="4U4Q">
    <property type="method" value="X-ray"/>
    <property type="resolution" value="3.00 A"/>
    <property type="chains" value="C5/c5=2-142"/>
</dbReference>
<dbReference type="PDB" id="4U4R">
    <property type="method" value="X-ray"/>
    <property type="resolution" value="2.80 A"/>
    <property type="chains" value="C5/c5=2-142"/>
</dbReference>
<dbReference type="PDB" id="4U4U">
    <property type="method" value="X-ray"/>
    <property type="resolution" value="3.00 A"/>
    <property type="chains" value="C5/c5=2-142"/>
</dbReference>
<dbReference type="PDB" id="4U4Y">
    <property type="method" value="X-ray"/>
    <property type="resolution" value="3.20 A"/>
    <property type="chains" value="C5/c5=2-142"/>
</dbReference>
<dbReference type="PDB" id="4U4Z">
    <property type="method" value="X-ray"/>
    <property type="resolution" value="3.10 A"/>
    <property type="chains" value="C5/c5=2-142"/>
</dbReference>
<dbReference type="PDB" id="4U50">
    <property type="method" value="X-ray"/>
    <property type="resolution" value="3.20 A"/>
    <property type="chains" value="C5/c5=2-142"/>
</dbReference>
<dbReference type="PDB" id="4U51">
    <property type="method" value="X-ray"/>
    <property type="resolution" value="3.20 A"/>
    <property type="chains" value="C5/c5=2-142"/>
</dbReference>
<dbReference type="PDB" id="4U52">
    <property type="method" value="X-ray"/>
    <property type="resolution" value="3.00 A"/>
    <property type="chains" value="C5/c5=2-142"/>
</dbReference>
<dbReference type="PDB" id="4U53">
    <property type="method" value="X-ray"/>
    <property type="resolution" value="3.30 A"/>
    <property type="chains" value="C5/c5=2-142"/>
</dbReference>
<dbReference type="PDB" id="4U55">
    <property type="method" value="X-ray"/>
    <property type="resolution" value="3.20 A"/>
    <property type="chains" value="C5/c5=2-142"/>
</dbReference>
<dbReference type="PDB" id="4U56">
    <property type="method" value="X-ray"/>
    <property type="resolution" value="3.45 A"/>
    <property type="chains" value="C5/c5=2-142"/>
</dbReference>
<dbReference type="PDB" id="4U6F">
    <property type="method" value="X-ray"/>
    <property type="resolution" value="3.10 A"/>
    <property type="chains" value="C5/c5=2-142"/>
</dbReference>
<dbReference type="PDB" id="4V4B">
    <property type="method" value="EM"/>
    <property type="resolution" value="11.70 A"/>
    <property type="chains" value="AS=47-126"/>
</dbReference>
<dbReference type="PDB" id="4V5Z">
    <property type="method" value="EM"/>
    <property type="resolution" value="8.70 A"/>
    <property type="chains" value="As=1-142"/>
</dbReference>
<dbReference type="PDB" id="4V6I">
    <property type="method" value="EM"/>
    <property type="resolution" value="8.80 A"/>
    <property type="chains" value="AR=1-142"/>
</dbReference>
<dbReference type="PDB" id="4V7R">
    <property type="method" value="X-ray"/>
    <property type="resolution" value="4.00 A"/>
    <property type="chains" value="AI/CI=1-142"/>
</dbReference>
<dbReference type="PDB" id="4V88">
    <property type="method" value="X-ray"/>
    <property type="resolution" value="3.00 A"/>
    <property type="chains" value="AP/CP=1-142"/>
</dbReference>
<dbReference type="PDB" id="4V8Y">
    <property type="method" value="EM"/>
    <property type="resolution" value="4.30 A"/>
    <property type="chains" value="AP=1-142"/>
</dbReference>
<dbReference type="PDB" id="4V8Z">
    <property type="method" value="EM"/>
    <property type="resolution" value="6.60 A"/>
    <property type="chains" value="AP=1-142"/>
</dbReference>
<dbReference type="PDB" id="4V92">
    <property type="method" value="EM"/>
    <property type="resolution" value="3.70 A"/>
    <property type="chains" value="P=12-126"/>
</dbReference>
<dbReference type="PDB" id="5DAT">
    <property type="method" value="X-ray"/>
    <property type="resolution" value="3.15 A"/>
    <property type="chains" value="C5/c5=2-138"/>
</dbReference>
<dbReference type="PDB" id="5DC3">
    <property type="method" value="X-ray"/>
    <property type="resolution" value="3.25 A"/>
    <property type="chains" value="C5/c5=2-142"/>
</dbReference>
<dbReference type="PDB" id="5DGE">
    <property type="method" value="X-ray"/>
    <property type="resolution" value="3.45 A"/>
    <property type="chains" value="C5/c5=2-142"/>
</dbReference>
<dbReference type="PDB" id="5DGF">
    <property type="method" value="X-ray"/>
    <property type="resolution" value="3.30 A"/>
    <property type="chains" value="C5/c5=1-142"/>
</dbReference>
<dbReference type="PDB" id="5DGV">
    <property type="method" value="X-ray"/>
    <property type="resolution" value="3.10 A"/>
    <property type="chains" value="C5/c5=2-142"/>
</dbReference>
<dbReference type="PDB" id="5FCI">
    <property type="method" value="X-ray"/>
    <property type="resolution" value="3.40 A"/>
    <property type="chains" value="C5/c5=2-142"/>
</dbReference>
<dbReference type="PDB" id="5FCJ">
    <property type="method" value="X-ray"/>
    <property type="resolution" value="3.10 A"/>
    <property type="chains" value="C5/c5=2-142"/>
</dbReference>
<dbReference type="PDB" id="5I4L">
    <property type="method" value="X-ray"/>
    <property type="resolution" value="3.10 A"/>
    <property type="chains" value="C5/c5=1-142"/>
</dbReference>
<dbReference type="PDB" id="5JUO">
    <property type="method" value="EM"/>
    <property type="resolution" value="4.00 A"/>
    <property type="chains" value="MB=1-142"/>
</dbReference>
<dbReference type="PDB" id="5JUP">
    <property type="method" value="EM"/>
    <property type="resolution" value="3.50 A"/>
    <property type="chains" value="MB=1-142"/>
</dbReference>
<dbReference type="PDB" id="5JUS">
    <property type="method" value="EM"/>
    <property type="resolution" value="4.20 A"/>
    <property type="chains" value="MB=1-142"/>
</dbReference>
<dbReference type="PDB" id="5JUT">
    <property type="method" value="EM"/>
    <property type="resolution" value="4.00 A"/>
    <property type="chains" value="MB=1-142"/>
</dbReference>
<dbReference type="PDB" id="5JUU">
    <property type="method" value="EM"/>
    <property type="resolution" value="4.00 A"/>
    <property type="chains" value="MB=1-142"/>
</dbReference>
<dbReference type="PDB" id="5LYB">
    <property type="method" value="X-ray"/>
    <property type="resolution" value="3.25 A"/>
    <property type="chains" value="C5=4-134, c5=1-142"/>
</dbReference>
<dbReference type="PDB" id="5M1J">
    <property type="method" value="EM"/>
    <property type="resolution" value="3.30 A"/>
    <property type="chains" value="P2=8-131"/>
</dbReference>
<dbReference type="PDB" id="5MC6">
    <property type="method" value="EM"/>
    <property type="resolution" value="3.80 A"/>
    <property type="chains" value="E=1-142"/>
</dbReference>
<dbReference type="PDB" id="5MEI">
    <property type="method" value="X-ray"/>
    <property type="resolution" value="3.50 A"/>
    <property type="chains" value="Q/c5=2-142"/>
</dbReference>
<dbReference type="PDB" id="5NDG">
    <property type="method" value="X-ray"/>
    <property type="resolution" value="3.70 A"/>
    <property type="chains" value="C5/c5=2-142"/>
</dbReference>
<dbReference type="PDB" id="5NDV">
    <property type="method" value="X-ray"/>
    <property type="resolution" value="3.30 A"/>
    <property type="chains" value="C5/c5=2-142"/>
</dbReference>
<dbReference type="PDB" id="5NDW">
    <property type="method" value="X-ray"/>
    <property type="resolution" value="3.70 A"/>
    <property type="chains" value="C5/c5=2-142"/>
</dbReference>
<dbReference type="PDB" id="5OBM">
    <property type="method" value="X-ray"/>
    <property type="resolution" value="3.40 A"/>
    <property type="chains" value="C5/c5=2-142"/>
</dbReference>
<dbReference type="PDB" id="5ON6">
    <property type="method" value="X-ray"/>
    <property type="resolution" value="3.10 A"/>
    <property type="chains" value="Q/c5=2-142"/>
</dbReference>
<dbReference type="PDB" id="5TBW">
    <property type="method" value="X-ray"/>
    <property type="resolution" value="3.00 A"/>
    <property type="chains" value="Q/c5=4-138"/>
</dbReference>
<dbReference type="PDB" id="5TGA">
    <property type="method" value="X-ray"/>
    <property type="resolution" value="3.30 A"/>
    <property type="chains" value="C5/c5=4-138"/>
</dbReference>
<dbReference type="PDB" id="5TGM">
    <property type="method" value="X-ray"/>
    <property type="resolution" value="3.50 A"/>
    <property type="chains" value="C5/c5=10-134"/>
</dbReference>
<dbReference type="PDB" id="6EML">
    <property type="method" value="EM"/>
    <property type="resolution" value="3.60 A"/>
    <property type="chains" value="E=1-142"/>
</dbReference>
<dbReference type="PDB" id="6FAI">
    <property type="method" value="EM"/>
    <property type="resolution" value="3.40 A"/>
    <property type="chains" value="P=1-142"/>
</dbReference>
<dbReference type="PDB" id="6GQ1">
    <property type="method" value="EM"/>
    <property type="resolution" value="4.40 A"/>
    <property type="chains" value="AF=8-131"/>
</dbReference>
<dbReference type="PDB" id="6GQB">
    <property type="method" value="EM"/>
    <property type="resolution" value="3.90 A"/>
    <property type="chains" value="AF=8-131"/>
</dbReference>
<dbReference type="PDB" id="6GQV">
    <property type="method" value="EM"/>
    <property type="resolution" value="4.00 A"/>
    <property type="chains" value="AF=8-131"/>
</dbReference>
<dbReference type="PDB" id="6HHQ">
    <property type="method" value="X-ray"/>
    <property type="resolution" value="3.10 A"/>
    <property type="chains" value="Q/c5=1-142"/>
</dbReference>
<dbReference type="PDB" id="6I7O">
    <property type="method" value="EM"/>
    <property type="resolution" value="5.30 A"/>
    <property type="chains" value="E/Eb=14-132"/>
</dbReference>
<dbReference type="PDB" id="6Q8Y">
    <property type="method" value="EM"/>
    <property type="resolution" value="3.10 A"/>
    <property type="chains" value="E=8-128"/>
</dbReference>
<dbReference type="PDB" id="6RBD">
    <property type="method" value="EM"/>
    <property type="resolution" value="3.47 A"/>
    <property type="chains" value="P=1-142"/>
</dbReference>
<dbReference type="PDB" id="6RBE">
    <property type="method" value="EM"/>
    <property type="resolution" value="3.80 A"/>
    <property type="chains" value="P=1-142"/>
</dbReference>
<dbReference type="PDB" id="6S47">
    <property type="method" value="EM"/>
    <property type="resolution" value="3.28 A"/>
    <property type="chains" value="BQ=2-142"/>
</dbReference>
<dbReference type="PDB" id="6SNT">
    <property type="method" value="EM"/>
    <property type="resolution" value="2.80 A"/>
    <property type="chains" value="P=1-142"/>
</dbReference>
<dbReference type="PDB" id="6SV4">
    <property type="method" value="EM"/>
    <property type="resolution" value="3.30 A"/>
    <property type="chains" value="E/Eb/Ec=1-142"/>
</dbReference>
<dbReference type="PDB" id="6T4Q">
    <property type="method" value="EM"/>
    <property type="resolution" value="2.60 A"/>
    <property type="chains" value="SP=13-129"/>
</dbReference>
<dbReference type="PDB" id="6T7I">
    <property type="method" value="EM"/>
    <property type="resolution" value="3.20 A"/>
    <property type="chains" value="SP=1-142"/>
</dbReference>
<dbReference type="PDB" id="6T7T">
    <property type="method" value="EM"/>
    <property type="resolution" value="3.10 A"/>
    <property type="chains" value="SP=1-142"/>
</dbReference>
<dbReference type="PDB" id="6T83">
    <property type="method" value="EM"/>
    <property type="resolution" value="4.00 A"/>
    <property type="chains" value="Pb/q=1-142"/>
</dbReference>
<dbReference type="PDB" id="6TB3">
    <property type="method" value="EM"/>
    <property type="resolution" value="2.80 A"/>
    <property type="chains" value="E=13-129"/>
</dbReference>
<dbReference type="PDB" id="6TNU">
    <property type="method" value="EM"/>
    <property type="resolution" value="3.10 A"/>
    <property type="chains" value="E=13-129"/>
</dbReference>
<dbReference type="PDB" id="6WDR">
    <property type="method" value="EM"/>
    <property type="resolution" value="3.70 A"/>
    <property type="chains" value="P=16-142"/>
</dbReference>
<dbReference type="PDB" id="6WOO">
    <property type="method" value="EM"/>
    <property type="resolution" value="2.90 A"/>
    <property type="chains" value="PP=25-127"/>
</dbReference>
<dbReference type="PDB" id="6Y7C">
    <property type="method" value="EM"/>
    <property type="resolution" value="3.80 A"/>
    <property type="chains" value="P=1-142"/>
</dbReference>
<dbReference type="PDB" id="6Z6J">
    <property type="method" value="EM"/>
    <property type="resolution" value="3.40 A"/>
    <property type="chains" value="SP=1-142"/>
</dbReference>
<dbReference type="PDB" id="6Z6K">
    <property type="method" value="EM"/>
    <property type="resolution" value="3.40 A"/>
    <property type="chains" value="SP=1-142"/>
</dbReference>
<dbReference type="PDB" id="6ZCE">
    <property type="method" value="EM"/>
    <property type="resolution" value="5.30 A"/>
    <property type="chains" value="Q=2-142"/>
</dbReference>
<dbReference type="PDB" id="6ZU9">
    <property type="method" value="EM"/>
    <property type="resolution" value="6.20 A"/>
    <property type="chains" value="E=2-142"/>
</dbReference>
<dbReference type="PDB" id="6ZVI">
    <property type="method" value="EM"/>
    <property type="resolution" value="3.00 A"/>
    <property type="chains" value="x=14-132"/>
</dbReference>
<dbReference type="PDB" id="7A1G">
    <property type="method" value="EM"/>
    <property type="resolution" value="3.00 A"/>
    <property type="chains" value="E=13-129"/>
</dbReference>
<dbReference type="PDB" id="7B7D">
    <property type="method" value="EM"/>
    <property type="resolution" value="3.30 A"/>
    <property type="chains" value="E=13-129"/>
</dbReference>
<dbReference type="PDB" id="7MPI">
    <property type="method" value="EM"/>
    <property type="resolution" value="3.05 A"/>
    <property type="chains" value="BP=8-131"/>
</dbReference>
<dbReference type="PDB" id="7MPJ">
    <property type="method" value="EM"/>
    <property type="resolution" value="2.70 A"/>
    <property type="chains" value="BP=8-131"/>
</dbReference>
<dbReference type="PDB" id="7N8B">
    <property type="method" value="EM"/>
    <property type="resolution" value="3.05 A"/>
    <property type="chains" value="BP=8-131"/>
</dbReference>
<dbReference type="PDB" id="7NRC">
    <property type="method" value="EM"/>
    <property type="resolution" value="3.90 A"/>
    <property type="chains" value="SE=13-129"/>
</dbReference>
<dbReference type="PDB" id="7NRD">
    <property type="method" value="EM"/>
    <property type="resolution" value="4.36 A"/>
    <property type="chains" value="SE=14-132"/>
</dbReference>
<dbReference type="PDB" id="7ZPQ">
    <property type="method" value="EM"/>
    <property type="resolution" value="3.47 A"/>
    <property type="chains" value="AP=13-129"/>
</dbReference>
<dbReference type="PDB" id="7ZRS">
    <property type="method" value="EM"/>
    <property type="resolution" value="4.80 A"/>
    <property type="chains" value="AP=13-129"/>
</dbReference>
<dbReference type="PDB" id="7ZUW">
    <property type="method" value="EM"/>
    <property type="resolution" value="4.30 A"/>
    <property type="chains" value="AP=13-129"/>
</dbReference>
<dbReference type="PDB" id="7ZUX">
    <property type="method" value="EM"/>
    <property type="resolution" value="2.50 A"/>
    <property type="chains" value="DP=13-129"/>
</dbReference>
<dbReference type="PDB" id="7ZW0">
    <property type="method" value="EM"/>
    <property type="resolution" value="2.40 A"/>
    <property type="chains" value="sE=1-142"/>
</dbReference>
<dbReference type="PDB" id="8BN3">
    <property type="method" value="EM"/>
    <property type="resolution" value="2.40 A"/>
    <property type="chains" value="C5=8-131"/>
</dbReference>
<dbReference type="PDB" id="8BQD">
    <property type="method" value="EM"/>
    <property type="resolution" value="3.90 A"/>
    <property type="chains" value="E=1-142"/>
</dbReference>
<dbReference type="PDB" id="8BQX">
    <property type="method" value="EM"/>
    <property type="resolution" value="3.80 A"/>
    <property type="chains" value="E=1-142"/>
</dbReference>
<dbReference type="PDB" id="8C00">
    <property type="method" value="EM"/>
    <property type="resolution" value="2.90 A"/>
    <property type="chains" value="E=1-142"/>
</dbReference>
<dbReference type="PDB" id="8C01">
    <property type="method" value="EM"/>
    <property type="resolution" value="2.70 A"/>
    <property type="chains" value="E=1-142"/>
</dbReference>
<dbReference type="PDB" id="8CAH">
    <property type="method" value="EM"/>
    <property type="resolution" value="3.00 A"/>
    <property type="chains" value="E=1-142"/>
</dbReference>
<dbReference type="PDB" id="8CAS">
    <property type="method" value="EM"/>
    <property type="resolution" value="3.30 A"/>
    <property type="chains" value="E=1-142"/>
</dbReference>
<dbReference type="PDB" id="8CBJ">
    <property type="method" value="EM"/>
    <property type="resolution" value="3.80 A"/>
    <property type="chains" value="P=1-142"/>
</dbReference>
<dbReference type="PDB" id="8CCS">
    <property type="method" value="EM"/>
    <property type="resolution" value="1.97 A"/>
    <property type="chains" value="r=1-142"/>
</dbReference>
<dbReference type="PDB" id="8CDL">
    <property type="method" value="EM"/>
    <property type="resolution" value="2.72 A"/>
    <property type="chains" value="r=1-142"/>
</dbReference>
<dbReference type="PDB" id="8CDR">
    <property type="method" value="EM"/>
    <property type="resolution" value="2.04 A"/>
    <property type="chains" value="r=1-142"/>
</dbReference>
<dbReference type="PDB" id="8CEH">
    <property type="method" value="EM"/>
    <property type="resolution" value="2.05 A"/>
    <property type="chains" value="r=1-142"/>
</dbReference>
<dbReference type="PDB" id="8CF5">
    <property type="method" value="EM"/>
    <property type="resolution" value="2.71 A"/>
    <property type="chains" value="r=1-142"/>
</dbReference>
<dbReference type="PDB" id="8CG8">
    <property type="method" value="EM"/>
    <property type="resolution" value="2.57 A"/>
    <property type="chains" value="r=1-142"/>
</dbReference>
<dbReference type="PDB" id="8CGN">
    <property type="method" value="EM"/>
    <property type="resolution" value="2.28 A"/>
    <property type="chains" value="r=1-142"/>
</dbReference>
<dbReference type="PDB" id="8CIV">
    <property type="method" value="EM"/>
    <property type="resolution" value="2.47 A"/>
    <property type="chains" value="r=1-142"/>
</dbReference>
<dbReference type="PDB" id="8CKU">
    <property type="method" value="EM"/>
    <property type="resolution" value="3.11 A"/>
    <property type="chains" value="r=1-142"/>
</dbReference>
<dbReference type="PDB" id="8CMJ">
    <property type="method" value="EM"/>
    <property type="resolution" value="3.79 A"/>
    <property type="chains" value="r=1-142"/>
</dbReference>
<dbReference type="PDB" id="8K2D">
    <property type="method" value="EM"/>
    <property type="resolution" value="3.20 A"/>
    <property type="chains" value="SP=1-142"/>
</dbReference>
<dbReference type="PDB" id="8K82">
    <property type="method" value="EM"/>
    <property type="resolution" value="3.00 A"/>
    <property type="chains" value="SP=1-142"/>
</dbReference>
<dbReference type="PDB" id="8P4V">
    <property type="method" value="X-ray"/>
    <property type="resolution" value="3.16 A"/>
    <property type="chains" value="Q/c5=1-142"/>
</dbReference>
<dbReference type="PDB" id="8P9A">
    <property type="method" value="X-ray"/>
    <property type="resolution" value="2.90 A"/>
    <property type="chains" value="Q/c5=1-142"/>
</dbReference>
<dbReference type="PDB" id="8T2X">
    <property type="method" value="EM"/>
    <property type="resolution" value="2.46 A"/>
    <property type="chains" value="BP=1-142"/>
</dbReference>
<dbReference type="PDB" id="8T2Y">
    <property type="method" value="EM"/>
    <property type="resolution" value="2.20 A"/>
    <property type="chains" value="BP=1-142"/>
</dbReference>
<dbReference type="PDB" id="8T2Z">
    <property type="method" value="EM"/>
    <property type="resolution" value="2.40 A"/>
    <property type="chains" value="BP=1-142"/>
</dbReference>
<dbReference type="PDB" id="8T30">
    <property type="method" value="EM"/>
    <property type="resolution" value="2.88 A"/>
    <property type="chains" value="BP=1-142"/>
</dbReference>
<dbReference type="PDB" id="8T3A">
    <property type="method" value="EM"/>
    <property type="resolution" value="2.86 A"/>
    <property type="chains" value="BP=1-142"/>
</dbReference>
<dbReference type="PDB" id="8T3B">
    <property type="method" value="EM"/>
    <property type="resolution" value="3.08 A"/>
    <property type="chains" value="BP=1-142"/>
</dbReference>
<dbReference type="PDB" id="8T3C">
    <property type="method" value="EM"/>
    <property type="resolution" value="3.86 A"/>
    <property type="chains" value="BP=1-142"/>
</dbReference>
<dbReference type="PDB" id="8T3D">
    <property type="method" value="EM"/>
    <property type="resolution" value="2.95 A"/>
    <property type="chains" value="BP=1-142"/>
</dbReference>
<dbReference type="PDB" id="8T3E">
    <property type="method" value="EM"/>
    <property type="resolution" value="3.04 A"/>
    <property type="chains" value="BP=1-142"/>
</dbReference>
<dbReference type="PDB" id="8T3F">
    <property type="method" value="EM"/>
    <property type="resolution" value="3.09 A"/>
    <property type="chains" value="BP=1-142"/>
</dbReference>
<dbReference type="PDB" id="8UT0">
    <property type="method" value="EM"/>
    <property type="resolution" value="3.22 A"/>
    <property type="chains" value="SE=13-129"/>
</dbReference>
<dbReference type="PDB" id="8UTI">
    <property type="method" value="EM"/>
    <property type="resolution" value="3.13 A"/>
    <property type="chains" value="SE=13-129"/>
</dbReference>
<dbReference type="PDB" id="8XU8">
    <property type="method" value="EM"/>
    <property type="resolution" value="3.40 A"/>
    <property type="chains" value="SE=13-129"/>
</dbReference>
<dbReference type="PDB" id="8Y0U">
    <property type="method" value="EM"/>
    <property type="resolution" value="3.59 A"/>
    <property type="chains" value="SP=1-142"/>
</dbReference>
<dbReference type="PDB" id="8YLD">
    <property type="method" value="EM"/>
    <property type="resolution" value="3.90 A"/>
    <property type="chains" value="SE=13-129"/>
</dbReference>
<dbReference type="PDB" id="8YLR">
    <property type="method" value="EM"/>
    <property type="resolution" value="3.90 A"/>
    <property type="chains" value="SE=13-129"/>
</dbReference>
<dbReference type="PDB" id="8Z70">
    <property type="method" value="EM"/>
    <property type="resolution" value="3.20 A"/>
    <property type="chains" value="SE=13-129"/>
</dbReference>
<dbReference type="PDB" id="8Z71">
    <property type="method" value="EM"/>
    <property type="resolution" value="3.60 A"/>
    <property type="chains" value="SE=13-129"/>
</dbReference>
<dbReference type="PDB" id="9F9S">
    <property type="method" value="EM"/>
    <property type="resolution" value="2.90 A"/>
    <property type="chains" value="Rp/Sp=1-142"/>
</dbReference>
<dbReference type="PDBsum" id="3J6X"/>
<dbReference type="PDBsum" id="3J6Y"/>
<dbReference type="PDBsum" id="3J77"/>
<dbReference type="PDBsum" id="3J78"/>
<dbReference type="PDBsum" id="4U3M"/>
<dbReference type="PDBsum" id="4U3N"/>
<dbReference type="PDBsum" id="4U3U"/>
<dbReference type="PDBsum" id="4U4N"/>
<dbReference type="PDBsum" id="4U4O"/>
<dbReference type="PDBsum" id="4U4Q"/>
<dbReference type="PDBsum" id="4U4R"/>
<dbReference type="PDBsum" id="4U4U"/>
<dbReference type="PDBsum" id="4U4Y"/>
<dbReference type="PDBsum" id="4U4Z"/>
<dbReference type="PDBsum" id="4U50"/>
<dbReference type="PDBsum" id="4U51"/>
<dbReference type="PDBsum" id="4U52"/>
<dbReference type="PDBsum" id="4U53"/>
<dbReference type="PDBsum" id="4U55"/>
<dbReference type="PDBsum" id="4U56"/>
<dbReference type="PDBsum" id="4U6F"/>
<dbReference type="PDBsum" id="4V4B"/>
<dbReference type="PDBsum" id="4V5Z"/>
<dbReference type="PDBsum" id="4V6I"/>
<dbReference type="PDBsum" id="4V7R"/>
<dbReference type="PDBsum" id="4V88"/>
<dbReference type="PDBsum" id="4V8Y"/>
<dbReference type="PDBsum" id="4V8Z"/>
<dbReference type="PDBsum" id="4V92"/>
<dbReference type="PDBsum" id="5DAT"/>
<dbReference type="PDBsum" id="5DC3"/>
<dbReference type="PDBsum" id="5DGE"/>
<dbReference type="PDBsum" id="5DGF"/>
<dbReference type="PDBsum" id="5DGV"/>
<dbReference type="PDBsum" id="5FCI"/>
<dbReference type="PDBsum" id="5FCJ"/>
<dbReference type="PDBsum" id="5I4L"/>
<dbReference type="PDBsum" id="5JUO"/>
<dbReference type="PDBsum" id="5JUP"/>
<dbReference type="PDBsum" id="5JUS"/>
<dbReference type="PDBsum" id="5JUT"/>
<dbReference type="PDBsum" id="5JUU"/>
<dbReference type="PDBsum" id="5LYB"/>
<dbReference type="PDBsum" id="5M1J"/>
<dbReference type="PDBsum" id="5MC6"/>
<dbReference type="PDBsum" id="5MEI"/>
<dbReference type="PDBsum" id="5NDG"/>
<dbReference type="PDBsum" id="5NDV"/>
<dbReference type="PDBsum" id="5NDW"/>
<dbReference type="PDBsum" id="5OBM"/>
<dbReference type="PDBsum" id="5ON6"/>
<dbReference type="PDBsum" id="5TBW"/>
<dbReference type="PDBsum" id="5TGA"/>
<dbReference type="PDBsum" id="5TGM"/>
<dbReference type="PDBsum" id="6EML"/>
<dbReference type="PDBsum" id="6FAI"/>
<dbReference type="PDBsum" id="6GQ1"/>
<dbReference type="PDBsum" id="6GQB"/>
<dbReference type="PDBsum" id="6GQV"/>
<dbReference type="PDBsum" id="6HHQ"/>
<dbReference type="PDBsum" id="6I7O"/>
<dbReference type="PDBsum" id="6Q8Y"/>
<dbReference type="PDBsum" id="6RBD"/>
<dbReference type="PDBsum" id="6RBE"/>
<dbReference type="PDBsum" id="6S47"/>
<dbReference type="PDBsum" id="6SNT"/>
<dbReference type="PDBsum" id="6SV4"/>
<dbReference type="PDBsum" id="6T4Q"/>
<dbReference type="PDBsum" id="6T7I"/>
<dbReference type="PDBsum" id="6T7T"/>
<dbReference type="PDBsum" id="6T83"/>
<dbReference type="PDBsum" id="6TB3"/>
<dbReference type="PDBsum" id="6TNU"/>
<dbReference type="PDBsum" id="6WDR"/>
<dbReference type="PDBsum" id="6WOO"/>
<dbReference type="PDBsum" id="6Y7C"/>
<dbReference type="PDBsum" id="6Z6J"/>
<dbReference type="PDBsum" id="6Z6K"/>
<dbReference type="PDBsum" id="6ZCE"/>
<dbReference type="PDBsum" id="6ZU9"/>
<dbReference type="PDBsum" id="6ZVI"/>
<dbReference type="PDBsum" id="7A1G"/>
<dbReference type="PDBsum" id="7B7D"/>
<dbReference type="PDBsum" id="7MPI"/>
<dbReference type="PDBsum" id="7MPJ"/>
<dbReference type="PDBsum" id="7N8B"/>
<dbReference type="PDBsum" id="7NRC"/>
<dbReference type="PDBsum" id="7NRD"/>
<dbReference type="PDBsum" id="7ZPQ"/>
<dbReference type="PDBsum" id="7ZRS"/>
<dbReference type="PDBsum" id="7ZUW"/>
<dbReference type="PDBsum" id="7ZUX"/>
<dbReference type="PDBsum" id="7ZW0"/>
<dbReference type="PDBsum" id="8BN3"/>
<dbReference type="PDBsum" id="8BQD"/>
<dbReference type="PDBsum" id="8BQX"/>
<dbReference type="PDBsum" id="8C00"/>
<dbReference type="PDBsum" id="8C01"/>
<dbReference type="PDBsum" id="8CAH"/>
<dbReference type="PDBsum" id="8CAS"/>
<dbReference type="PDBsum" id="8CBJ"/>
<dbReference type="PDBsum" id="8CCS"/>
<dbReference type="PDBsum" id="8CDL"/>
<dbReference type="PDBsum" id="8CDR"/>
<dbReference type="PDBsum" id="8CEH"/>
<dbReference type="PDBsum" id="8CF5"/>
<dbReference type="PDBsum" id="8CG8"/>
<dbReference type="PDBsum" id="8CGN"/>
<dbReference type="PDBsum" id="8CIV"/>
<dbReference type="PDBsum" id="8CKU"/>
<dbReference type="PDBsum" id="8CMJ"/>
<dbReference type="PDBsum" id="8K2D"/>
<dbReference type="PDBsum" id="8K82"/>
<dbReference type="PDBsum" id="8P4V"/>
<dbReference type="PDBsum" id="8P9A"/>
<dbReference type="PDBsum" id="8T2X"/>
<dbReference type="PDBsum" id="8T2Y"/>
<dbReference type="PDBsum" id="8T2Z"/>
<dbReference type="PDBsum" id="8T30"/>
<dbReference type="PDBsum" id="8T3A"/>
<dbReference type="PDBsum" id="8T3B"/>
<dbReference type="PDBsum" id="8T3C"/>
<dbReference type="PDBsum" id="8T3D"/>
<dbReference type="PDBsum" id="8T3E"/>
<dbReference type="PDBsum" id="8T3F"/>
<dbReference type="PDBsum" id="8UT0"/>
<dbReference type="PDBsum" id="8UTI"/>
<dbReference type="PDBsum" id="8XU8"/>
<dbReference type="PDBsum" id="8Y0U"/>
<dbReference type="PDBsum" id="8YLD"/>
<dbReference type="PDBsum" id="8YLR"/>
<dbReference type="PDBsum" id="8Z70"/>
<dbReference type="PDBsum" id="8Z71"/>
<dbReference type="PDBsum" id="9F9S"/>
<dbReference type="EMDB" id="EMD-0047"/>
<dbReference type="EMDB" id="EMD-0048"/>
<dbReference type="EMDB" id="EMD-0049"/>
<dbReference type="EMDB" id="EMD-10098"/>
<dbReference type="EMDB" id="EMD-10262"/>
<dbReference type="EMDB" id="EMD-10315"/>
<dbReference type="EMDB" id="EMD-10377"/>
<dbReference type="EMDB" id="EMD-10396"/>
<dbReference type="EMDB" id="EMD-10397"/>
<dbReference type="EMDB" id="EMD-10398"/>
<dbReference type="EMDB" id="EMD-10431"/>
<dbReference type="EMDB" id="EMD-10537"/>
<dbReference type="EMDB" id="EMD-10713"/>
<dbReference type="EMDB" id="EMD-11096"/>
<dbReference type="EMDB" id="EMD-11097"/>
<dbReference type="EMDB" id="EMD-11160"/>
<dbReference type="EMDB" id="EMD-11439"/>
<dbReference type="EMDB" id="EMD-11608"/>
<dbReference type="EMDB" id="EMD-12081"/>
<dbReference type="EMDB" id="EMD-12534"/>
<dbReference type="EMDB" id="EMD-12535"/>
<dbReference type="EMDB" id="EMD-14979"/>
<dbReference type="EMDB" id="EMD-14990"/>
<dbReference type="EMDB" id="EMD-16182"/>
<dbReference type="EMDB" id="EMD-16191"/>
<dbReference type="EMDB" id="EMD-16347"/>
<dbReference type="EMDB" id="EMD-16349"/>
<dbReference type="EMDB" id="EMD-16533"/>
<dbReference type="EMDB" id="EMD-16541"/>
<dbReference type="EMDB" id="EMD-16563"/>
<dbReference type="EMDB" id="EMD-16591"/>
<dbReference type="EMDB" id="EMD-16594"/>
<dbReference type="EMDB" id="EMD-16609"/>
<dbReference type="EMDB" id="EMD-16616"/>
<dbReference type="EMDB" id="EMD-16634"/>
<dbReference type="EMDB" id="EMD-16648"/>
<dbReference type="EMDB" id="EMD-16684"/>
<dbReference type="EMDB" id="EMD-16702"/>
<dbReference type="EMDB" id="EMD-16729"/>
<dbReference type="EMDB" id="EMD-21644"/>
<dbReference type="EMDB" id="EMD-21859"/>
<dbReference type="EMDB" id="EMD-23934"/>
<dbReference type="EMDB" id="EMD-23935"/>
<dbReference type="EMDB" id="EMD-24235"/>
<dbReference type="EMDB" id="EMD-3461"/>
<dbReference type="EMDB" id="EMD-36839"/>
<dbReference type="EMDB" id="EMD-36945"/>
<dbReference type="EMDB" id="EMD-38660"/>
<dbReference type="EMDB" id="EMD-4140"/>
<dbReference type="EMDB" id="EMD-4214"/>
<dbReference type="EMDB" id="EMD-4427"/>
<dbReference type="EMDB" id="EMD-4474"/>
<dbReference type="EMDB" id="EMD-4792"/>
<dbReference type="EMDB" id="EMD-4793"/>
<dbReference type="EMDB" id="EMD-50259"/>
<dbReference type="SMR" id="Q01855"/>
<dbReference type="BioGRID" id="34362">
    <property type="interactions" value="829"/>
</dbReference>
<dbReference type="ComplexPortal" id="CPX-1599">
    <property type="entry name" value="40S cytosolic small ribosomal subunit"/>
</dbReference>
<dbReference type="FunCoup" id="Q01855">
    <property type="interactions" value="1081"/>
</dbReference>
<dbReference type="IntAct" id="Q01855">
    <property type="interactions" value="70"/>
</dbReference>
<dbReference type="MINT" id="Q01855"/>
<dbReference type="STRING" id="4932.YOL040C"/>
<dbReference type="iPTMnet" id="Q01855"/>
<dbReference type="PaxDb" id="4932-YOL040C"/>
<dbReference type="PeptideAtlas" id="Q01855"/>
<dbReference type="TopDownProteomics" id="Q01855"/>
<dbReference type="EnsemblFungi" id="YOL040C_mRNA">
    <property type="protein sequence ID" value="YOL040C"/>
    <property type="gene ID" value="YOL040C"/>
</dbReference>
<dbReference type="GeneID" id="854117"/>
<dbReference type="KEGG" id="sce:YOL040C"/>
<dbReference type="AGR" id="SGD:S000005400"/>
<dbReference type="SGD" id="S000005400">
    <property type="gene designation" value="RPS15"/>
</dbReference>
<dbReference type="VEuPathDB" id="FungiDB:YOL040C"/>
<dbReference type="eggNOG" id="KOG0898">
    <property type="taxonomic scope" value="Eukaryota"/>
</dbReference>
<dbReference type="GeneTree" id="ENSGT00390000000475"/>
<dbReference type="HOGENOM" id="CLU_097347_1_0_1"/>
<dbReference type="InParanoid" id="Q01855"/>
<dbReference type="OMA" id="KTHCRDM"/>
<dbReference type="OrthoDB" id="10258210at2759"/>
<dbReference type="BioCyc" id="YEAST:G3O-33454-MONOMER"/>
<dbReference type="Reactome" id="R-SCE-156827">
    <property type="pathway name" value="L13a-mediated translational silencing of Ceruloplasmin expression"/>
</dbReference>
<dbReference type="Reactome" id="R-SCE-1799339">
    <property type="pathway name" value="SRP-dependent cotranslational protein targeting to membrane"/>
</dbReference>
<dbReference type="Reactome" id="R-SCE-72649">
    <property type="pathway name" value="Translation initiation complex formation"/>
</dbReference>
<dbReference type="Reactome" id="R-SCE-72689">
    <property type="pathway name" value="Formation of a pool of free 40S subunits"/>
</dbReference>
<dbReference type="Reactome" id="R-SCE-72695">
    <property type="pathway name" value="Formation of the ternary complex, and subsequently, the 43S complex"/>
</dbReference>
<dbReference type="Reactome" id="R-SCE-72702">
    <property type="pathway name" value="Ribosomal scanning and start codon recognition"/>
</dbReference>
<dbReference type="Reactome" id="R-SCE-72706">
    <property type="pathway name" value="GTP hydrolysis and joining of the 60S ribosomal subunit"/>
</dbReference>
<dbReference type="Reactome" id="R-SCE-975956">
    <property type="pathway name" value="Nonsense Mediated Decay (NMD) independent of the Exon Junction Complex (EJC)"/>
</dbReference>
<dbReference type="Reactome" id="R-SCE-975957">
    <property type="pathway name" value="Nonsense Mediated Decay (NMD) enhanced by the Exon Junction Complex (EJC)"/>
</dbReference>
<dbReference type="BioGRID-ORCS" id="854117">
    <property type="hits" value="3 hits in 10 CRISPR screens"/>
</dbReference>
<dbReference type="PRO" id="PR:Q01855"/>
<dbReference type="Proteomes" id="UP000002311">
    <property type="component" value="Chromosome XV"/>
</dbReference>
<dbReference type="RNAct" id="Q01855">
    <property type="molecule type" value="protein"/>
</dbReference>
<dbReference type="GO" id="GO:0005737">
    <property type="term" value="C:cytoplasm"/>
    <property type="evidence" value="ECO:0000314"/>
    <property type="project" value="ComplexPortal"/>
</dbReference>
<dbReference type="GO" id="GO:0005829">
    <property type="term" value="C:cytosol"/>
    <property type="evidence" value="ECO:0000304"/>
    <property type="project" value="Reactome"/>
</dbReference>
<dbReference type="GO" id="GO:0022627">
    <property type="term" value="C:cytosolic small ribosomal subunit"/>
    <property type="evidence" value="ECO:0000353"/>
    <property type="project" value="ComplexPortal"/>
</dbReference>
<dbReference type="GO" id="GO:0003723">
    <property type="term" value="F:RNA binding"/>
    <property type="evidence" value="ECO:0007669"/>
    <property type="project" value="InterPro"/>
</dbReference>
<dbReference type="GO" id="GO:0003735">
    <property type="term" value="F:structural constituent of ribosome"/>
    <property type="evidence" value="ECO:0000318"/>
    <property type="project" value="GO_Central"/>
</dbReference>
<dbReference type="GO" id="GO:0002181">
    <property type="term" value="P:cytoplasmic translation"/>
    <property type="evidence" value="ECO:0000303"/>
    <property type="project" value="SGD"/>
</dbReference>
<dbReference type="GO" id="GO:0000028">
    <property type="term" value="P:ribosomal small subunit assembly"/>
    <property type="evidence" value="ECO:0000318"/>
    <property type="project" value="GO_Central"/>
</dbReference>
<dbReference type="GO" id="GO:0000054">
    <property type="term" value="P:ribosomal subunit export from nucleus"/>
    <property type="evidence" value="ECO:0000315"/>
    <property type="project" value="SGD"/>
</dbReference>
<dbReference type="FunFam" id="3.30.860.10:FF:000002">
    <property type="entry name" value="40S ribosomal protein S15"/>
    <property type="match status" value="1"/>
</dbReference>
<dbReference type="Gene3D" id="3.30.860.10">
    <property type="entry name" value="30s Ribosomal Protein S19, Chain A"/>
    <property type="match status" value="1"/>
</dbReference>
<dbReference type="HAMAP" id="MF_00531">
    <property type="entry name" value="Ribosomal_uS19"/>
    <property type="match status" value="1"/>
</dbReference>
<dbReference type="InterPro" id="IPR002222">
    <property type="entry name" value="Ribosomal_uS19"/>
</dbReference>
<dbReference type="InterPro" id="IPR020934">
    <property type="entry name" value="Ribosomal_uS19_CS"/>
</dbReference>
<dbReference type="InterPro" id="IPR005713">
    <property type="entry name" value="Ribosomal_uS19_euk/arc"/>
</dbReference>
<dbReference type="InterPro" id="IPR023575">
    <property type="entry name" value="Ribosomal_uS19_SF"/>
</dbReference>
<dbReference type="NCBIfam" id="NF003121">
    <property type="entry name" value="PRK04038.1"/>
    <property type="match status" value="1"/>
</dbReference>
<dbReference type="NCBIfam" id="TIGR01025">
    <property type="entry name" value="uS19_arch"/>
    <property type="match status" value="1"/>
</dbReference>
<dbReference type="PANTHER" id="PTHR11880">
    <property type="entry name" value="RIBOSOMAL PROTEIN S19P FAMILY MEMBER"/>
    <property type="match status" value="1"/>
</dbReference>
<dbReference type="PANTHER" id="PTHR11880:SF2">
    <property type="entry name" value="SMALL RIBOSOMAL SUBUNIT PROTEIN US19"/>
    <property type="match status" value="1"/>
</dbReference>
<dbReference type="Pfam" id="PF00203">
    <property type="entry name" value="Ribosomal_S19"/>
    <property type="match status" value="1"/>
</dbReference>
<dbReference type="PIRSF" id="PIRSF002144">
    <property type="entry name" value="Ribosomal_S19"/>
    <property type="match status" value="1"/>
</dbReference>
<dbReference type="PRINTS" id="PR00975">
    <property type="entry name" value="RIBOSOMALS19"/>
</dbReference>
<dbReference type="SUPFAM" id="SSF54570">
    <property type="entry name" value="Ribosomal protein S19"/>
    <property type="match status" value="1"/>
</dbReference>
<dbReference type="PROSITE" id="PS00323">
    <property type="entry name" value="RIBOSOMAL_S19"/>
    <property type="match status" value="1"/>
</dbReference>
<protein>
    <recommendedName>
        <fullName evidence="4">Small ribosomal subunit protein uS19</fullName>
    </recommendedName>
    <alternativeName>
        <fullName evidence="5">40S ribosomal protein S15</fullName>
    </alternativeName>
    <alternativeName>
        <fullName>RIG protein</fullName>
    </alternativeName>
    <alternativeName>
        <fullName>RP52</fullName>
    </alternativeName>
    <alternativeName>
        <fullName>S21</fullName>
    </alternativeName>
    <alternativeName>
        <fullName>YS21</fullName>
    </alternativeName>
</protein>
<organism>
    <name type="scientific">Saccharomyces cerevisiae (strain ATCC 204508 / S288c)</name>
    <name type="common">Baker's yeast</name>
    <dbReference type="NCBI Taxonomy" id="559292"/>
    <lineage>
        <taxon>Eukaryota</taxon>
        <taxon>Fungi</taxon>
        <taxon>Dikarya</taxon>
        <taxon>Ascomycota</taxon>
        <taxon>Saccharomycotina</taxon>
        <taxon>Saccharomycetes</taxon>
        <taxon>Saccharomycetales</taxon>
        <taxon>Saccharomycetaceae</taxon>
        <taxon>Saccharomyces</taxon>
    </lineage>
</organism>
<proteinExistence type="evidence at protein level"/>
<accession>Q01855</accession>
<accession>D6W226</accession>
<reference key="1">
    <citation type="journal article" date="1992" name="FEBS Lett.">
        <title>Structural determination of Saccharomyces cerevisiae rig gene and identification of its product as ribosomal protein S21.</title>
        <authorList>
            <person name="Takasawa S."/>
            <person name="Tohgo A."/>
            <person name="Unno M."/>
            <person name="Yonekura H."/>
            <person name="Okamoto H."/>
        </authorList>
    </citation>
    <scope>NUCLEOTIDE SEQUENCE [GENOMIC DNA / MRNA]</scope>
</reference>
<reference key="2">
    <citation type="journal article" date="1997" name="Nature">
        <title>The nucleotide sequence of Saccharomyces cerevisiae chromosome XV.</title>
        <authorList>
            <person name="Dujon B."/>
            <person name="Albermann K."/>
            <person name="Aldea M."/>
            <person name="Alexandraki D."/>
            <person name="Ansorge W."/>
            <person name="Arino J."/>
            <person name="Benes V."/>
            <person name="Bohn C."/>
            <person name="Bolotin-Fukuhara M."/>
            <person name="Bordonne R."/>
            <person name="Boyer J."/>
            <person name="Camasses A."/>
            <person name="Casamayor A."/>
            <person name="Casas C."/>
            <person name="Cheret G."/>
            <person name="Cziepluch C."/>
            <person name="Daignan-Fornier B."/>
            <person name="Dang V.-D."/>
            <person name="de Haan M."/>
            <person name="Delius H."/>
            <person name="Durand P."/>
            <person name="Fairhead C."/>
            <person name="Feldmann H."/>
            <person name="Gaillon L."/>
            <person name="Galisson F."/>
            <person name="Gamo F.-J."/>
            <person name="Gancedo C."/>
            <person name="Goffeau A."/>
            <person name="Goulding S.E."/>
            <person name="Grivell L.A."/>
            <person name="Habbig B."/>
            <person name="Hand N.J."/>
            <person name="Hani J."/>
            <person name="Hattenhorst U."/>
            <person name="Hebling U."/>
            <person name="Hernando Y."/>
            <person name="Herrero E."/>
            <person name="Heumann K."/>
            <person name="Hiesel R."/>
            <person name="Hilger F."/>
            <person name="Hofmann B."/>
            <person name="Hollenberg C.P."/>
            <person name="Hughes B."/>
            <person name="Jauniaux J.-C."/>
            <person name="Kalogeropoulos A."/>
            <person name="Katsoulou C."/>
            <person name="Kordes E."/>
            <person name="Lafuente M.J."/>
            <person name="Landt O."/>
            <person name="Louis E.J."/>
            <person name="Maarse A.C."/>
            <person name="Madania A."/>
            <person name="Mannhaupt G."/>
            <person name="Marck C."/>
            <person name="Martin R.P."/>
            <person name="Mewes H.-W."/>
            <person name="Michaux G."/>
            <person name="Paces V."/>
            <person name="Parle-McDermott A.G."/>
            <person name="Pearson B.M."/>
            <person name="Perrin A."/>
            <person name="Pettersson B."/>
            <person name="Poch O."/>
            <person name="Pohl T.M."/>
            <person name="Poirey R."/>
            <person name="Portetelle D."/>
            <person name="Pujol A."/>
            <person name="Purnelle B."/>
            <person name="Ramezani Rad M."/>
            <person name="Rechmann S."/>
            <person name="Schwager C."/>
            <person name="Schweizer M."/>
            <person name="Sor F."/>
            <person name="Sterky F."/>
            <person name="Tarassov I.A."/>
            <person name="Teodoru C."/>
            <person name="Tettelin H."/>
            <person name="Thierry A."/>
            <person name="Tobiasch E."/>
            <person name="Tzermia M."/>
            <person name="Uhlen M."/>
            <person name="Unseld M."/>
            <person name="Valens M."/>
            <person name="Vandenbol M."/>
            <person name="Vetter I."/>
            <person name="Vlcek C."/>
            <person name="Voet M."/>
            <person name="Volckaert G."/>
            <person name="Voss H."/>
            <person name="Wambutt R."/>
            <person name="Wedler H."/>
            <person name="Wiemann S."/>
            <person name="Winsor B."/>
            <person name="Wolfe K.H."/>
            <person name="Zollner A."/>
            <person name="Zumstein E."/>
            <person name="Kleine K."/>
        </authorList>
    </citation>
    <scope>NUCLEOTIDE SEQUENCE [LARGE SCALE GENOMIC DNA]</scope>
    <source>
        <strain>ATCC 204508 / S288c</strain>
    </source>
</reference>
<reference key="3">
    <citation type="journal article" date="2014" name="G3 (Bethesda)">
        <title>The reference genome sequence of Saccharomyces cerevisiae: Then and now.</title>
        <authorList>
            <person name="Engel S.R."/>
            <person name="Dietrich F.S."/>
            <person name="Fisk D.G."/>
            <person name="Binkley G."/>
            <person name="Balakrishnan R."/>
            <person name="Costanzo M.C."/>
            <person name="Dwight S.S."/>
            <person name="Hitz B.C."/>
            <person name="Karra K."/>
            <person name="Nash R.S."/>
            <person name="Weng S."/>
            <person name="Wong E.D."/>
            <person name="Lloyd P."/>
            <person name="Skrzypek M.S."/>
            <person name="Miyasato S.R."/>
            <person name="Simison M."/>
            <person name="Cherry J.M."/>
        </authorList>
    </citation>
    <scope>GENOME REANNOTATION</scope>
    <source>
        <strain>ATCC 204508 / S288c</strain>
    </source>
</reference>
<reference key="4">
    <citation type="journal article" date="2007" name="Genome Res.">
        <title>Approaching a complete repository of sequence-verified protein-encoding clones for Saccharomyces cerevisiae.</title>
        <authorList>
            <person name="Hu Y."/>
            <person name="Rolfs A."/>
            <person name="Bhullar B."/>
            <person name="Murthy T.V.S."/>
            <person name="Zhu C."/>
            <person name="Berger M.F."/>
            <person name="Camargo A.A."/>
            <person name="Kelley F."/>
            <person name="McCarron S."/>
            <person name="Jepson D."/>
            <person name="Richardson A."/>
            <person name="Raphael J."/>
            <person name="Moreira D."/>
            <person name="Taycher E."/>
            <person name="Zuo D."/>
            <person name="Mohr S."/>
            <person name="Kane M.F."/>
            <person name="Williamson J."/>
            <person name="Simpson A.J.G."/>
            <person name="Bulyk M.L."/>
            <person name="Harlow E."/>
            <person name="Marsischky G."/>
            <person name="Kolodner R.D."/>
            <person name="LaBaer J."/>
        </authorList>
    </citation>
    <scope>NUCLEOTIDE SEQUENCE [GENOMIC DNA]</scope>
    <source>
        <strain>ATCC 204508 / S288c</strain>
    </source>
</reference>
<reference key="5">
    <citation type="journal article" date="1998" name="Yeast">
        <title>The list of cytoplasmic ribosomal proteins of Saccharomyces cerevisiae.</title>
        <authorList>
            <person name="Planta R.J."/>
            <person name="Mager W.H."/>
        </authorList>
    </citation>
    <scope>NOMENCLATURE</scope>
    <scope>SUBUNIT</scope>
</reference>
<reference key="6">
    <citation type="journal article" date="1999" name="J. Biol. Chem.">
        <title>The action of N-terminal acetyltransferases on yeast ribosomal proteins.</title>
        <authorList>
            <person name="Arnold R.J."/>
            <person name="Polevoda B."/>
            <person name="Reilly J.P."/>
            <person name="Sherman F."/>
        </authorList>
    </citation>
    <scope>CLEAVAGE OF INITIATOR METHIONINE</scope>
    <scope>ACETYLATION AT SER-2 BY NATA</scope>
</reference>
<reference key="7">
    <citation type="journal article" date="2004" name="EMBO J.">
        <title>The ribosomal protein Rps15p is required for nuclear exit of the 40S subunit precursors in yeast.</title>
        <authorList>
            <person name="Leger-Silvestre I."/>
            <person name="Milkereit P."/>
            <person name="Ferreira-Cerca S."/>
            <person name="Saveanu C."/>
            <person name="Rousselle J.-C."/>
            <person name="Choesmel V."/>
            <person name="Guinefoleau C."/>
            <person name="Gas N."/>
            <person name="Gleizes P.-E."/>
        </authorList>
    </citation>
    <scope>FUNCTION</scope>
</reference>
<reference key="8">
    <citation type="journal article" date="2007" name="Proc. Natl. Acad. Sci. U.S.A.">
        <title>Analysis of phosphorylation sites on proteins from Saccharomyces cerevisiae by electron transfer dissociation (ETD) mass spectrometry.</title>
        <authorList>
            <person name="Chi A."/>
            <person name="Huttenhower C."/>
            <person name="Geer L.Y."/>
            <person name="Coon J.J."/>
            <person name="Syka J.E.P."/>
            <person name="Bai D.L."/>
            <person name="Shabanowitz J."/>
            <person name="Burke D.J."/>
            <person name="Troyanskaya O.G."/>
            <person name="Hunt D.F."/>
        </authorList>
    </citation>
    <scope>IDENTIFICATION BY MASS SPECTROMETRY [LARGE SCALE ANALYSIS]</scope>
</reference>
<reference key="9">
    <citation type="journal article" date="2008" name="Mol. Cell. Proteomics">
        <title>A multidimensional chromatography technology for in-depth phosphoproteome analysis.</title>
        <authorList>
            <person name="Albuquerque C.P."/>
            <person name="Smolka M.B."/>
            <person name="Payne S.H."/>
            <person name="Bafna V."/>
            <person name="Eng J."/>
            <person name="Zhou H."/>
        </authorList>
    </citation>
    <scope>IDENTIFICATION BY MASS SPECTROMETRY [LARGE SCALE ANALYSIS]</scope>
</reference>
<reference key="10">
    <citation type="journal article" date="2012" name="Proc. Natl. Acad. Sci. U.S.A.">
        <title>N-terminal acetylome analyses and functional insights of the N-terminal acetyltransferase NatB.</title>
        <authorList>
            <person name="Van Damme P."/>
            <person name="Lasa M."/>
            <person name="Polevoda B."/>
            <person name="Gazquez C."/>
            <person name="Elosegui-Artola A."/>
            <person name="Kim D.S."/>
            <person name="De Juan-Pardo E."/>
            <person name="Demeyer K."/>
            <person name="Hole K."/>
            <person name="Larrea E."/>
            <person name="Timmerman E."/>
            <person name="Prieto J."/>
            <person name="Arnesen T."/>
            <person name="Sherman F."/>
            <person name="Gevaert K."/>
            <person name="Aldabe R."/>
        </authorList>
    </citation>
    <scope>ACETYLATION [LARGE SCALE ANALYSIS] AT SER-2</scope>
    <scope>CLEAVAGE OF INITIATOR METHIONINE [LARGE SCALE ANALYSIS]</scope>
    <scope>IDENTIFICATION BY MASS SPECTROMETRY [LARGE SCALE ANALYSIS]</scope>
</reference>
<reference key="11">
    <citation type="journal article" date="2012" name="Proteomics">
        <title>Sites of ubiquitin attachment in Saccharomyces cerevisiae.</title>
        <authorList>
            <person name="Starita L.M."/>
            <person name="Lo R.S."/>
            <person name="Eng J.K."/>
            <person name="von Haller P.D."/>
            <person name="Fields S."/>
        </authorList>
    </citation>
    <scope>UBIQUITINATION [LARGE SCALE ANALYSIS] AT LYS-24; LYS-35 AND LYS-64</scope>
    <scope>IDENTIFICATION BY MASS SPECTROMETRY [LARGE SCALE ANALYSIS]</scope>
</reference>
<reference key="12">
    <citation type="journal article" date="2014" name="Curr. Opin. Struct. Biol.">
        <title>A new system for naming ribosomal proteins.</title>
        <authorList>
            <person name="Ban N."/>
            <person name="Beckmann R."/>
            <person name="Cate J.H.D."/>
            <person name="Dinman J.D."/>
            <person name="Dragon F."/>
            <person name="Ellis S.R."/>
            <person name="Lafontaine D.L.J."/>
            <person name="Lindahl L."/>
            <person name="Liljas A."/>
            <person name="Lipton J.M."/>
            <person name="McAlear M.A."/>
            <person name="Moore P.B."/>
            <person name="Noller H.F."/>
            <person name="Ortega J."/>
            <person name="Panse V.G."/>
            <person name="Ramakrishnan V."/>
            <person name="Spahn C.M.T."/>
            <person name="Steitz T.A."/>
            <person name="Tchorzewski M."/>
            <person name="Tollervey D."/>
            <person name="Warren A.J."/>
            <person name="Williamson J.R."/>
            <person name="Wilson D."/>
            <person name="Yonath A."/>
            <person name="Yusupov M."/>
        </authorList>
    </citation>
    <scope>NOMENCLATURE</scope>
</reference>
<reference key="13">
    <citation type="journal article" date="2001" name="Cell">
        <title>Structure of the 80S ribosome from Saccharomyces cerevisiae -- tRNA-ribosome and subunit-subunit interactions.</title>
        <authorList>
            <person name="Spahn C.M.T."/>
            <person name="Beckmann R."/>
            <person name="Eswar N."/>
            <person name="Penczek P.A."/>
            <person name="Sali A."/>
            <person name="Blobel G."/>
            <person name="Frank J."/>
        </authorList>
    </citation>
    <scope>3D-STRUCTURE MODELING OF 47-126</scope>
    <scope>ELECTRON MICROSCOPY</scope>
</reference>
<reference key="14">
    <citation type="journal article" date="2004" name="EMBO J.">
        <title>Domain movements of elongation factor eEF2 and the eukaryotic 80S ribosome facilitate tRNA translocation.</title>
        <authorList>
            <person name="Spahn C.M.T."/>
            <person name="Gomez-Lorenzo M.G."/>
            <person name="Grassucci R.A."/>
            <person name="Joergensen R."/>
            <person name="Andersen G.R."/>
            <person name="Beckmann R."/>
            <person name="Penczek P.A."/>
            <person name="Ballesta J.P.G."/>
            <person name="Frank J."/>
        </authorList>
    </citation>
    <scope>3D-STRUCTURE MODELING OF 47-126</scope>
    <scope>ELECTRON MICROSCOPY</scope>
</reference>
<reference key="15">
    <citation type="journal article" date="2010" name="Science">
        <title>Crystal structure of the eukaryotic ribosome.</title>
        <authorList>
            <person name="Ben-Shem A."/>
            <person name="Jenner L."/>
            <person name="Yusupova G."/>
            <person name="Yusupov M."/>
        </authorList>
    </citation>
    <scope>X-RAY CRYSTALLOGRAPHY (4.00 ANGSTROMS) OF 80S RIBOSOME</scope>
</reference>
<reference key="16">
    <citation type="journal article" date="2011" name="Science">
        <title>The structure of the eukaryotic ribosome at 3.0 A resolution.</title>
        <authorList>
            <person name="Ben-Shem A."/>
            <person name="Garreau de Loubresse N."/>
            <person name="Melnikov S."/>
            <person name="Jenner L."/>
            <person name="Yusupova G."/>
            <person name="Yusupov M."/>
        </authorList>
    </citation>
    <scope>X-RAY CRYSTALLOGRAPHY (3.00 ANGSTROMS) OF 80S RIBOSOME</scope>
    <scope>SUBUNIT</scope>
    <scope>SUBCELLULAR LOCATION</scope>
</reference>
<gene>
    <name evidence="5" type="primary">RPS15</name>
    <name type="synonym">RPS21</name>
    <name type="ordered locus">YOL040C</name>
</gene>
<name>RS15_YEAST</name>
<keyword id="KW-0002">3D-structure</keyword>
<keyword id="KW-0007">Acetylation</keyword>
<keyword id="KW-0963">Cytoplasm</keyword>
<keyword id="KW-1017">Isopeptide bond</keyword>
<keyword id="KW-1185">Reference proteome</keyword>
<keyword id="KW-0687">Ribonucleoprotein</keyword>
<keyword id="KW-0689">Ribosomal protein</keyword>
<keyword id="KW-0690">Ribosome biogenesis</keyword>
<keyword id="KW-0832">Ubl conjugation</keyword>
<comment type="function">
    <text evidence="2 7">Component of the ribosome, a large ribonucleoprotein complex responsible for the synthesis of proteins in the cell. The small ribosomal subunit (SSU) binds messenger RNAs (mRNAs) and translates the encoded message by selecting cognate aminoacyl-transfer RNA (tRNA) molecules. The large subunit (LSU) contains the ribosomal catalytic site termed the peptidyl transferase center (PTC), which catalyzes the formation of peptide bonds, thereby polymerizing the amino acids delivered by tRNAs into a polypeptide chain. The nascent polypeptides leave the ribosome through a tunnel in the LSU and interact with protein factors that function in enzymatic processing, targeting, and the membrane insertion of nascent chains at the exit of the ribosomal tunnel (PubMed:22096102). uS19 is involved in the nuclear export of the small ribosomal subunit precursor. Has a role in the late stage of the assembly of pre-40S particles within the nucleus and controls their export to the cytoplasm (PubMed:15167894).</text>
</comment>
<comment type="subunit">
    <text evidence="3 8">Component of the small ribosomal subunit (SSU). Mature yeast ribosomes consist of a small (40S) and a large (60S) subunit. The 40S small subunit contains 1 molecule of ribosomal RNA (18S rRNA) and 33 different proteins (encoded by 57 genes). The large 60S subunit contains 3 rRNA molecules (25S, 5.8S and 5S rRNA) and 46 different proteins (encoded by 81 genes) (PubMed:22096102, PubMed:9559554).</text>
</comment>
<comment type="subcellular location">
    <subcellularLocation>
        <location evidence="3">Cytoplasm</location>
    </subcellularLocation>
</comment>
<comment type="similarity">
    <text evidence="6">Belongs to the universal ribosomal protein uS19 family.</text>
</comment>
<feature type="initiator methionine" description="Removed" evidence="1 10">
    <location>
        <position position="1"/>
    </location>
</feature>
<feature type="chain" id="PRO_0000130051" description="Small ribosomal subunit protein uS19">
    <location>
        <begin position="2"/>
        <end position="142"/>
    </location>
</feature>
<feature type="modified residue" description="N-acetylserine" evidence="1 10">
    <location>
        <position position="2"/>
    </location>
</feature>
<feature type="cross-link" description="Glycyl lysine isopeptide (Lys-Gly) (interchain with G-Cter in ubiquitin)" evidence="9">
    <location>
        <position position="24"/>
    </location>
</feature>
<feature type="cross-link" description="Glycyl lysine isopeptide (Lys-Gly) (interchain with G-Cter in ubiquitin)" evidence="9">
    <location>
        <position position="35"/>
    </location>
</feature>
<feature type="cross-link" description="Glycyl lysine isopeptide (Lys-Gly) (interchain with G-Cter in ubiquitin)" evidence="9">
    <location>
        <position position="64"/>
    </location>
</feature>
<feature type="strand" evidence="12">
    <location>
        <begin position="16"/>
        <end position="21"/>
    </location>
</feature>
<feature type="turn" evidence="13">
    <location>
        <begin position="22"/>
        <end position="27"/>
    </location>
</feature>
<feature type="helix" evidence="13">
    <location>
        <begin position="30"/>
        <end position="33"/>
    </location>
</feature>
<feature type="helix" evidence="13">
    <location>
        <begin position="34"/>
        <end position="36"/>
    </location>
</feature>
<feature type="helix" evidence="13">
    <location>
        <begin position="39"/>
        <end position="46"/>
    </location>
</feature>
<feature type="helix" evidence="13">
    <location>
        <begin position="52"/>
        <end position="65"/>
    </location>
</feature>
<feature type="strand" evidence="12">
    <location>
        <begin position="68"/>
        <end position="71"/>
    </location>
</feature>
<feature type="strand" evidence="13">
    <location>
        <begin position="76"/>
        <end position="78"/>
    </location>
</feature>
<feature type="helix" evidence="13">
    <location>
        <begin position="87"/>
        <end position="89"/>
    </location>
</feature>
<feature type="strand" evidence="13">
    <location>
        <begin position="93"/>
        <end position="97"/>
    </location>
</feature>
<feature type="strand" evidence="13">
    <location>
        <begin position="99"/>
        <end position="106"/>
    </location>
</feature>
<feature type="helix" evidence="13">
    <location>
        <begin position="109"/>
        <end position="111"/>
    </location>
</feature>
<feature type="strand" evidence="14">
    <location>
        <begin position="113"/>
        <end position="115"/>
    </location>
</feature>
<feature type="helix" evidence="13">
    <location>
        <begin position="116"/>
        <end position="119"/>
    </location>
</feature>
<feature type="turn" evidence="11">
    <location>
        <begin position="132"/>
        <end position="134"/>
    </location>
</feature>
<feature type="strand" evidence="11">
    <location>
        <begin position="135"/>
        <end position="140"/>
    </location>
</feature>
<evidence type="ECO:0000269" key="1">
    <source>
    </source>
</evidence>
<evidence type="ECO:0000269" key="2">
    <source>
    </source>
</evidence>
<evidence type="ECO:0000269" key="3">
    <source>
    </source>
</evidence>
<evidence type="ECO:0000303" key="4">
    <source>
    </source>
</evidence>
<evidence type="ECO:0000303" key="5">
    <source>
    </source>
</evidence>
<evidence type="ECO:0000305" key="6"/>
<evidence type="ECO:0000305" key="7">
    <source>
    </source>
</evidence>
<evidence type="ECO:0000305" key="8">
    <source>
    </source>
</evidence>
<evidence type="ECO:0007744" key="9">
    <source>
    </source>
</evidence>
<evidence type="ECO:0007744" key="10">
    <source>
    </source>
</evidence>
<evidence type="ECO:0007829" key="11">
    <source>
        <dbReference type="PDB" id="6FAI"/>
    </source>
</evidence>
<evidence type="ECO:0007829" key="12">
    <source>
        <dbReference type="PDB" id="6ZVI"/>
    </source>
</evidence>
<evidence type="ECO:0007829" key="13">
    <source>
        <dbReference type="PDB" id="8C01"/>
    </source>
</evidence>
<evidence type="ECO:0007829" key="14">
    <source>
        <dbReference type="PDB" id="8CAS"/>
    </source>
</evidence>
<sequence length="142" mass="16002">MSQAVNAKKRVFKTHSYRGVDLEKLLEMSTEDFVKLAPARVRRRFARGMTSKPAGFMKKLRAAKLAAPENEKPAPVRTHMRNMIIVPEMIGSVVGIYNGKAFNQVEIRPEMLGHYLGEFSITYTPVRHGRAGATTSRFIPLK</sequence>